<dbReference type="EMBL" id="CP001191">
    <property type="protein sequence ID" value="ACI53812.1"/>
    <property type="molecule type" value="Genomic_DNA"/>
</dbReference>
<dbReference type="RefSeq" id="WP_012556746.1">
    <property type="nucleotide sequence ID" value="NC_011369.1"/>
</dbReference>
<dbReference type="SMR" id="B5ZS19"/>
<dbReference type="STRING" id="395492.Rleg2_0515"/>
<dbReference type="KEGG" id="rlt:Rleg2_0515"/>
<dbReference type="eggNOG" id="COG0711">
    <property type="taxonomic scope" value="Bacteria"/>
</dbReference>
<dbReference type="HOGENOM" id="CLU_079215_6_1_5"/>
<dbReference type="Proteomes" id="UP000008330">
    <property type="component" value="Chromosome"/>
</dbReference>
<dbReference type="GO" id="GO:0005886">
    <property type="term" value="C:plasma membrane"/>
    <property type="evidence" value="ECO:0007669"/>
    <property type="project" value="UniProtKB-SubCell"/>
</dbReference>
<dbReference type="GO" id="GO:0045259">
    <property type="term" value="C:proton-transporting ATP synthase complex"/>
    <property type="evidence" value="ECO:0007669"/>
    <property type="project" value="UniProtKB-KW"/>
</dbReference>
<dbReference type="GO" id="GO:0046933">
    <property type="term" value="F:proton-transporting ATP synthase activity, rotational mechanism"/>
    <property type="evidence" value="ECO:0007669"/>
    <property type="project" value="UniProtKB-UniRule"/>
</dbReference>
<dbReference type="GO" id="GO:0046961">
    <property type="term" value="F:proton-transporting ATPase activity, rotational mechanism"/>
    <property type="evidence" value="ECO:0007669"/>
    <property type="project" value="TreeGrafter"/>
</dbReference>
<dbReference type="CDD" id="cd06503">
    <property type="entry name" value="ATP-synt_Fo_b"/>
    <property type="match status" value="1"/>
</dbReference>
<dbReference type="HAMAP" id="MF_01398">
    <property type="entry name" value="ATP_synth_b_bprime"/>
    <property type="match status" value="1"/>
</dbReference>
<dbReference type="InterPro" id="IPR002146">
    <property type="entry name" value="ATP_synth_b/b'su_bac/chlpt"/>
</dbReference>
<dbReference type="InterPro" id="IPR050059">
    <property type="entry name" value="ATP_synthase_B_chain"/>
</dbReference>
<dbReference type="NCBIfam" id="NF006611">
    <property type="entry name" value="PRK09173.1"/>
    <property type="match status" value="1"/>
</dbReference>
<dbReference type="PANTHER" id="PTHR33445:SF1">
    <property type="entry name" value="ATP SYNTHASE SUBUNIT B"/>
    <property type="match status" value="1"/>
</dbReference>
<dbReference type="PANTHER" id="PTHR33445">
    <property type="entry name" value="ATP SYNTHASE SUBUNIT B', CHLOROPLASTIC"/>
    <property type="match status" value="1"/>
</dbReference>
<dbReference type="Pfam" id="PF00430">
    <property type="entry name" value="ATP-synt_B"/>
    <property type="match status" value="1"/>
</dbReference>
<name>ATPF1_RHILW</name>
<protein>
    <recommendedName>
        <fullName evidence="1">ATP synthase subunit b 1</fullName>
    </recommendedName>
    <alternativeName>
        <fullName evidence="1">ATP synthase F(0) sector subunit b 1</fullName>
    </alternativeName>
    <alternativeName>
        <fullName evidence="1">ATPase subunit I 1</fullName>
    </alternativeName>
    <alternativeName>
        <fullName evidence="1">F-type ATPase subunit b 1</fullName>
        <shortName evidence="1">F-ATPase subunit b 1</shortName>
    </alternativeName>
</protein>
<accession>B5ZS19</accession>
<gene>
    <name evidence="1" type="primary">atpF1</name>
    <name type="ordered locus">Rleg2_0515</name>
</gene>
<comment type="function">
    <text evidence="1">F(1)F(0) ATP synthase produces ATP from ADP in the presence of a proton or sodium gradient. F-type ATPases consist of two structural domains, F(1) containing the extramembraneous catalytic core and F(0) containing the membrane proton channel, linked together by a central stalk and a peripheral stalk. During catalysis, ATP synthesis in the catalytic domain of F(1) is coupled via a rotary mechanism of the central stalk subunits to proton translocation.</text>
</comment>
<comment type="function">
    <text evidence="1">Component of the F(0) channel, it forms part of the peripheral stalk, linking F(1) to F(0).</text>
</comment>
<comment type="subunit">
    <text evidence="1">F-type ATPases have 2 components, F(1) - the catalytic core - and F(0) - the membrane proton channel. F(1) has five subunits: alpha(3), beta(3), gamma(1), delta(1), epsilon(1). F(0) has three main subunits: a(1), b(2) and c(10-14). The alpha and beta chains form an alternating ring which encloses part of the gamma chain. F(1) is attached to F(0) by a central stalk formed by the gamma and epsilon chains, while a peripheral stalk is formed by the delta and b chains.</text>
</comment>
<comment type="subcellular location">
    <subcellularLocation>
        <location evidence="1">Cell inner membrane</location>
        <topology evidence="1">Single-pass membrane protein</topology>
    </subcellularLocation>
</comment>
<comment type="similarity">
    <text evidence="1">Belongs to the ATPase B chain family.</text>
</comment>
<sequence>MEFHFDATFFAFVGLVLFLALVVYLKVPGMMARSLDDRADQIRNELAEAKRLREEAQHLLAEYQRKRKEAEAEAAHIVAAAEREAQMLTAEAKKKTEEFVANRTALSEQKIKQAEVEAMKAVRSAAVDLAIAAAETVLGKQADAKVQSELFGNAVGQVKTRLN</sequence>
<organism>
    <name type="scientific">Rhizobium leguminosarum bv. trifolii (strain WSM2304)</name>
    <dbReference type="NCBI Taxonomy" id="395492"/>
    <lineage>
        <taxon>Bacteria</taxon>
        <taxon>Pseudomonadati</taxon>
        <taxon>Pseudomonadota</taxon>
        <taxon>Alphaproteobacteria</taxon>
        <taxon>Hyphomicrobiales</taxon>
        <taxon>Rhizobiaceae</taxon>
        <taxon>Rhizobium/Agrobacterium group</taxon>
        <taxon>Rhizobium</taxon>
    </lineage>
</organism>
<keyword id="KW-0066">ATP synthesis</keyword>
<keyword id="KW-0997">Cell inner membrane</keyword>
<keyword id="KW-1003">Cell membrane</keyword>
<keyword id="KW-0138">CF(0)</keyword>
<keyword id="KW-0375">Hydrogen ion transport</keyword>
<keyword id="KW-0406">Ion transport</keyword>
<keyword id="KW-0472">Membrane</keyword>
<keyword id="KW-1185">Reference proteome</keyword>
<keyword id="KW-0812">Transmembrane</keyword>
<keyword id="KW-1133">Transmembrane helix</keyword>
<keyword id="KW-0813">Transport</keyword>
<reference key="1">
    <citation type="journal article" date="2010" name="Stand. Genomic Sci.">
        <title>Complete genome sequence of Rhizobium leguminosarum bv trifolii strain WSM2304, an effective microsymbiont of the South American clover Trifolium polymorphum.</title>
        <authorList>
            <person name="Reeve W."/>
            <person name="O'Hara G."/>
            <person name="Chain P."/>
            <person name="Ardley J."/>
            <person name="Brau L."/>
            <person name="Nandesena K."/>
            <person name="Tiwari R."/>
            <person name="Malfatti S."/>
            <person name="Kiss H."/>
            <person name="Lapidus A."/>
            <person name="Copeland A."/>
            <person name="Nolan M."/>
            <person name="Land M."/>
            <person name="Ivanova N."/>
            <person name="Mavromatis K."/>
            <person name="Markowitz V."/>
            <person name="Kyrpides N."/>
            <person name="Melino V."/>
            <person name="Denton M."/>
            <person name="Yates R."/>
            <person name="Howieson J."/>
        </authorList>
    </citation>
    <scope>NUCLEOTIDE SEQUENCE [LARGE SCALE GENOMIC DNA]</scope>
    <source>
        <strain>WSM2304</strain>
    </source>
</reference>
<proteinExistence type="inferred from homology"/>
<feature type="chain" id="PRO_0000368709" description="ATP synthase subunit b 1">
    <location>
        <begin position="1"/>
        <end position="163"/>
    </location>
</feature>
<feature type="transmembrane region" description="Helical" evidence="1">
    <location>
        <begin position="5"/>
        <end position="25"/>
    </location>
</feature>
<evidence type="ECO:0000255" key="1">
    <source>
        <dbReference type="HAMAP-Rule" id="MF_01398"/>
    </source>
</evidence>